<gene>
    <name evidence="1" type="primary">hrcA</name>
    <name type="ordered locus">CLH_0856</name>
</gene>
<protein>
    <recommendedName>
        <fullName evidence="1">Heat-inducible transcription repressor HrcA</fullName>
    </recommendedName>
</protein>
<accession>B2V2I3</accession>
<name>HRCA_CLOBA</name>
<dbReference type="EMBL" id="CP001078">
    <property type="protein sequence ID" value="ACD52753.1"/>
    <property type="molecule type" value="Genomic_DNA"/>
</dbReference>
<dbReference type="RefSeq" id="WP_003372361.1">
    <property type="nucleotide sequence ID" value="NC_010723.1"/>
</dbReference>
<dbReference type="SMR" id="B2V2I3"/>
<dbReference type="KEGG" id="cbt:CLH_0856"/>
<dbReference type="HOGENOM" id="CLU_050019_1_0_9"/>
<dbReference type="GO" id="GO:0003677">
    <property type="term" value="F:DNA binding"/>
    <property type="evidence" value="ECO:0007669"/>
    <property type="project" value="InterPro"/>
</dbReference>
<dbReference type="GO" id="GO:0045892">
    <property type="term" value="P:negative regulation of DNA-templated transcription"/>
    <property type="evidence" value="ECO:0007669"/>
    <property type="project" value="UniProtKB-UniRule"/>
</dbReference>
<dbReference type="FunFam" id="1.10.10.10:FF:000049">
    <property type="entry name" value="Heat-inducible transcription repressor HrcA"/>
    <property type="match status" value="1"/>
</dbReference>
<dbReference type="Gene3D" id="3.30.450.40">
    <property type="match status" value="1"/>
</dbReference>
<dbReference type="Gene3D" id="3.30.390.60">
    <property type="entry name" value="Heat-inducible transcription repressor hrca homolog, domain 3"/>
    <property type="match status" value="1"/>
</dbReference>
<dbReference type="Gene3D" id="1.10.10.10">
    <property type="entry name" value="Winged helix-like DNA-binding domain superfamily/Winged helix DNA-binding domain"/>
    <property type="match status" value="1"/>
</dbReference>
<dbReference type="HAMAP" id="MF_00081">
    <property type="entry name" value="HrcA"/>
    <property type="match status" value="1"/>
</dbReference>
<dbReference type="InterPro" id="IPR029016">
    <property type="entry name" value="GAF-like_dom_sf"/>
</dbReference>
<dbReference type="InterPro" id="IPR002571">
    <property type="entry name" value="HrcA"/>
</dbReference>
<dbReference type="InterPro" id="IPR021153">
    <property type="entry name" value="HrcA_C"/>
</dbReference>
<dbReference type="InterPro" id="IPR036388">
    <property type="entry name" value="WH-like_DNA-bd_sf"/>
</dbReference>
<dbReference type="InterPro" id="IPR036390">
    <property type="entry name" value="WH_DNA-bd_sf"/>
</dbReference>
<dbReference type="InterPro" id="IPR023120">
    <property type="entry name" value="WHTH_transcript_rep_HrcA_IDD"/>
</dbReference>
<dbReference type="NCBIfam" id="TIGR00331">
    <property type="entry name" value="hrcA"/>
    <property type="match status" value="1"/>
</dbReference>
<dbReference type="PANTHER" id="PTHR34824">
    <property type="entry name" value="HEAT-INDUCIBLE TRANSCRIPTION REPRESSOR HRCA"/>
    <property type="match status" value="1"/>
</dbReference>
<dbReference type="PANTHER" id="PTHR34824:SF1">
    <property type="entry name" value="HEAT-INDUCIBLE TRANSCRIPTION REPRESSOR HRCA"/>
    <property type="match status" value="1"/>
</dbReference>
<dbReference type="Pfam" id="PF01628">
    <property type="entry name" value="HrcA"/>
    <property type="match status" value="1"/>
</dbReference>
<dbReference type="PIRSF" id="PIRSF005485">
    <property type="entry name" value="HrcA"/>
    <property type="match status" value="1"/>
</dbReference>
<dbReference type="SUPFAM" id="SSF55781">
    <property type="entry name" value="GAF domain-like"/>
    <property type="match status" value="1"/>
</dbReference>
<dbReference type="SUPFAM" id="SSF46785">
    <property type="entry name" value="Winged helix' DNA-binding domain"/>
    <property type="match status" value="1"/>
</dbReference>
<organism>
    <name type="scientific">Clostridium botulinum (strain Alaska E43 / Type E3)</name>
    <dbReference type="NCBI Taxonomy" id="508767"/>
    <lineage>
        <taxon>Bacteria</taxon>
        <taxon>Bacillati</taxon>
        <taxon>Bacillota</taxon>
        <taxon>Clostridia</taxon>
        <taxon>Eubacteriales</taxon>
        <taxon>Clostridiaceae</taxon>
        <taxon>Clostridium</taxon>
    </lineage>
</organism>
<comment type="function">
    <text evidence="1">Negative regulator of class I heat shock genes (grpE-dnaK-dnaJ and groELS operons). Prevents heat-shock induction of these operons.</text>
</comment>
<comment type="similarity">
    <text evidence="1">Belongs to the HrcA family.</text>
</comment>
<proteinExistence type="inferred from homology"/>
<sequence>MTIDDRKIKILQAIINDYIHTGDPVGSRTIAKKYNLGVGSATIRNEMADLEDMGYLEQPHASSGRVPSNKGYRLYVDSLMENQLLTPEENLKIKQYIIDTAMLEVDKIVRQTSSLLSELTNLTCVIQTPSVNKSFIKSLQLMKVDSTTLVSVIITDAGVMKNHIIRVNSTPTIEELNKINAVINRRLVNLCIEQINLQVINQLKEDLQGYDELFNALLTPLYETLKNAADSPDLIMEGATNIFNYPEYNDIEKAKEMLSLLNDKESLRDLLKTNKDITIRIGEENYKPQAKDCSIIAAEYSFGDRPIGTIGLIGPKRIDYSKVISIMAEIVKELNNILNNQSK</sequence>
<reference key="1">
    <citation type="submission" date="2008-05" db="EMBL/GenBank/DDBJ databases">
        <title>Complete genome sequence of Clostridium botulinum E3 str. Alaska E43.</title>
        <authorList>
            <person name="Brinkac L.M."/>
            <person name="Brown J.L."/>
            <person name="Bruce D."/>
            <person name="Detter C."/>
            <person name="Munk C."/>
            <person name="Smith L.A."/>
            <person name="Smith T.J."/>
            <person name="Sutton G."/>
            <person name="Brettin T.S."/>
        </authorList>
    </citation>
    <scope>NUCLEOTIDE SEQUENCE [LARGE SCALE GENOMIC DNA]</scope>
    <source>
        <strain>Alaska E43 / Type E3</strain>
    </source>
</reference>
<feature type="chain" id="PRO_1000092806" description="Heat-inducible transcription repressor HrcA">
    <location>
        <begin position="1"/>
        <end position="343"/>
    </location>
</feature>
<keyword id="KW-0678">Repressor</keyword>
<keyword id="KW-0346">Stress response</keyword>
<keyword id="KW-0804">Transcription</keyword>
<keyword id="KW-0805">Transcription regulation</keyword>
<evidence type="ECO:0000255" key="1">
    <source>
        <dbReference type="HAMAP-Rule" id="MF_00081"/>
    </source>
</evidence>